<organism>
    <name type="scientific">Chlorobaculum parvum (strain DSM 263 / NCIMB 8327)</name>
    <name type="common">Chlorobium vibrioforme subsp. thiosulfatophilum</name>
    <dbReference type="NCBI Taxonomy" id="517417"/>
    <lineage>
        <taxon>Bacteria</taxon>
        <taxon>Pseudomonadati</taxon>
        <taxon>Chlorobiota</taxon>
        <taxon>Chlorobiia</taxon>
        <taxon>Chlorobiales</taxon>
        <taxon>Chlorobiaceae</taxon>
        <taxon>Chlorobaculum</taxon>
    </lineage>
</organism>
<reference key="1">
    <citation type="submission" date="2008-06" db="EMBL/GenBank/DDBJ databases">
        <title>Complete sequence of Chlorobaculum parvum NCIB 8327.</title>
        <authorList>
            <consortium name="US DOE Joint Genome Institute"/>
            <person name="Lucas S."/>
            <person name="Copeland A."/>
            <person name="Lapidus A."/>
            <person name="Glavina del Rio T."/>
            <person name="Dalin E."/>
            <person name="Tice H."/>
            <person name="Bruce D."/>
            <person name="Goodwin L."/>
            <person name="Pitluck S."/>
            <person name="Schmutz J."/>
            <person name="Larimer F."/>
            <person name="Land M."/>
            <person name="Hauser L."/>
            <person name="Kyrpides N."/>
            <person name="Mikhailova N."/>
            <person name="Zhao F."/>
            <person name="Li T."/>
            <person name="Liu Z."/>
            <person name="Overmann J."/>
            <person name="Bryant D.A."/>
            <person name="Richardson P."/>
        </authorList>
    </citation>
    <scope>NUCLEOTIDE SEQUENCE [LARGE SCALE GENOMIC DNA]</scope>
    <source>
        <strain>DSM 263 / NCIMB 8327</strain>
    </source>
</reference>
<sequence length="187" mass="21278">MKHHSLIFLTGFSGSGKSTIGPLLANSLGFEFIDLDREIELAAGKSINRIFAEDGEAAFRELELRTLERIGSQKEMVVSLGGGVLENDRCFELIRRTGTLVYMKSSPEILSLRLQHKTDRPLLKGPNGEKLSREQVEQRISEILEKREPRYQKADLIIVTDSKKIGSTVEEMTRKIERHIRRVERDS</sequence>
<evidence type="ECO:0000255" key="1">
    <source>
        <dbReference type="HAMAP-Rule" id="MF_00109"/>
    </source>
</evidence>
<feature type="chain" id="PRO_1000094377" description="Shikimate kinase">
    <location>
        <begin position="1"/>
        <end position="187"/>
    </location>
</feature>
<feature type="binding site" evidence="1">
    <location>
        <begin position="14"/>
        <end position="19"/>
    </location>
    <ligand>
        <name>ATP</name>
        <dbReference type="ChEBI" id="CHEBI:30616"/>
    </ligand>
</feature>
<feature type="binding site" evidence="1">
    <location>
        <position position="18"/>
    </location>
    <ligand>
        <name>Mg(2+)</name>
        <dbReference type="ChEBI" id="CHEBI:18420"/>
    </ligand>
</feature>
<feature type="binding site" evidence="1">
    <location>
        <position position="36"/>
    </location>
    <ligand>
        <name>substrate</name>
    </ligand>
</feature>
<feature type="binding site" evidence="1">
    <location>
        <position position="60"/>
    </location>
    <ligand>
        <name>substrate</name>
    </ligand>
</feature>
<feature type="binding site" evidence="1">
    <location>
        <position position="82"/>
    </location>
    <ligand>
        <name>substrate</name>
    </ligand>
</feature>
<feature type="binding site" evidence="1">
    <location>
        <position position="120"/>
    </location>
    <ligand>
        <name>ATP</name>
        <dbReference type="ChEBI" id="CHEBI:30616"/>
    </ligand>
</feature>
<feature type="binding site" evidence="1">
    <location>
        <position position="147"/>
    </location>
    <ligand>
        <name>substrate</name>
    </ligand>
</feature>
<gene>
    <name evidence="1" type="primary">aroK</name>
    <name type="ordered locus">Cpar_0759</name>
</gene>
<accession>B3QMM3</accession>
<keyword id="KW-0028">Amino-acid biosynthesis</keyword>
<keyword id="KW-0057">Aromatic amino acid biosynthesis</keyword>
<keyword id="KW-0067">ATP-binding</keyword>
<keyword id="KW-0963">Cytoplasm</keyword>
<keyword id="KW-0418">Kinase</keyword>
<keyword id="KW-0460">Magnesium</keyword>
<keyword id="KW-0479">Metal-binding</keyword>
<keyword id="KW-0547">Nucleotide-binding</keyword>
<keyword id="KW-0808">Transferase</keyword>
<proteinExistence type="inferred from homology"/>
<name>AROK_CHLP8</name>
<comment type="function">
    <text evidence="1">Catalyzes the specific phosphorylation of the 3-hydroxyl group of shikimic acid using ATP as a cosubstrate.</text>
</comment>
<comment type="catalytic activity">
    <reaction evidence="1">
        <text>shikimate + ATP = 3-phosphoshikimate + ADP + H(+)</text>
        <dbReference type="Rhea" id="RHEA:13121"/>
        <dbReference type="ChEBI" id="CHEBI:15378"/>
        <dbReference type="ChEBI" id="CHEBI:30616"/>
        <dbReference type="ChEBI" id="CHEBI:36208"/>
        <dbReference type="ChEBI" id="CHEBI:145989"/>
        <dbReference type="ChEBI" id="CHEBI:456216"/>
        <dbReference type="EC" id="2.7.1.71"/>
    </reaction>
</comment>
<comment type="cofactor">
    <cofactor evidence="1">
        <name>Mg(2+)</name>
        <dbReference type="ChEBI" id="CHEBI:18420"/>
    </cofactor>
    <text evidence="1">Binds 1 Mg(2+) ion per subunit.</text>
</comment>
<comment type="pathway">
    <text evidence="1">Metabolic intermediate biosynthesis; chorismate biosynthesis; chorismate from D-erythrose 4-phosphate and phosphoenolpyruvate: step 5/7.</text>
</comment>
<comment type="subunit">
    <text evidence="1">Monomer.</text>
</comment>
<comment type="subcellular location">
    <subcellularLocation>
        <location evidence="1">Cytoplasm</location>
    </subcellularLocation>
</comment>
<comment type="similarity">
    <text evidence="1">Belongs to the shikimate kinase family.</text>
</comment>
<dbReference type="EC" id="2.7.1.71" evidence="1"/>
<dbReference type="EMBL" id="CP001099">
    <property type="protein sequence ID" value="ACF11176.1"/>
    <property type="molecule type" value="Genomic_DNA"/>
</dbReference>
<dbReference type="RefSeq" id="WP_012502009.1">
    <property type="nucleotide sequence ID" value="NC_011027.1"/>
</dbReference>
<dbReference type="SMR" id="B3QMM3"/>
<dbReference type="STRING" id="517417.Cpar_0759"/>
<dbReference type="KEGG" id="cpc:Cpar_0759"/>
<dbReference type="eggNOG" id="COG0703">
    <property type="taxonomic scope" value="Bacteria"/>
</dbReference>
<dbReference type="HOGENOM" id="CLU_057607_2_1_10"/>
<dbReference type="OrthoDB" id="9800332at2"/>
<dbReference type="UniPathway" id="UPA00053">
    <property type="reaction ID" value="UER00088"/>
</dbReference>
<dbReference type="Proteomes" id="UP000008811">
    <property type="component" value="Chromosome"/>
</dbReference>
<dbReference type="GO" id="GO:0005829">
    <property type="term" value="C:cytosol"/>
    <property type="evidence" value="ECO:0007669"/>
    <property type="project" value="TreeGrafter"/>
</dbReference>
<dbReference type="GO" id="GO:0005524">
    <property type="term" value="F:ATP binding"/>
    <property type="evidence" value="ECO:0007669"/>
    <property type="project" value="UniProtKB-UniRule"/>
</dbReference>
<dbReference type="GO" id="GO:0000287">
    <property type="term" value="F:magnesium ion binding"/>
    <property type="evidence" value="ECO:0007669"/>
    <property type="project" value="UniProtKB-UniRule"/>
</dbReference>
<dbReference type="GO" id="GO:0004765">
    <property type="term" value="F:shikimate kinase activity"/>
    <property type="evidence" value="ECO:0007669"/>
    <property type="project" value="UniProtKB-UniRule"/>
</dbReference>
<dbReference type="GO" id="GO:0008652">
    <property type="term" value="P:amino acid biosynthetic process"/>
    <property type="evidence" value="ECO:0007669"/>
    <property type="project" value="UniProtKB-KW"/>
</dbReference>
<dbReference type="GO" id="GO:0009073">
    <property type="term" value="P:aromatic amino acid family biosynthetic process"/>
    <property type="evidence" value="ECO:0007669"/>
    <property type="project" value="UniProtKB-KW"/>
</dbReference>
<dbReference type="GO" id="GO:0009423">
    <property type="term" value="P:chorismate biosynthetic process"/>
    <property type="evidence" value="ECO:0007669"/>
    <property type="project" value="UniProtKB-UniRule"/>
</dbReference>
<dbReference type="CDD" id="cd00464">
    <property type="entry name" value="SK"/>
    <property type="match status" value="1"/>
</dbReference>
<dbReference type="Gene3D" id="3.40.50.300">
    <property type="entry name" value="P-loop containing nucleotide triphosphate hydrolases"/>
    <property type="match status" value="1"/>
</dbReference>
<dbReference type="HAMAP" id="MF_00109">
    <property type="entry name" value="Shikimate_kinase"/>
    <property type="match status" value="1"/>
</dbReference>
<dbReference type="InterPro" id="IPR027417">
    <property type="entry name" value="P-loop_NTPase"/>
</dbReference>
<dbReference type="InterPro" id="IPR031322">
    <property type="entry name" value="Shikimate/glucono_kinase"/>
</dbReference>
<dbReference type="InterPro" id="IPR000623">
    <property type="entry name" value="Shikimate_kinase/TSH1"/>
</dbReference>
<dbReference type="InterPro" id="IPR023000">
    <property type="entry name" value="Shikimate_kinase_CS"/>
</dbReference>
<dbReference type="PANTHER" id="PTHR21087">
    <property type="entry name" value="SHIKIMATE KINASE"/>
    <property type="match status" value="1"/>
</dbReference>
<dbReference type="PANTHER" id="PTHR21087:SF16">
    <property type="entry name" value="SHIKIMATE KINASE 1, CHLOROPLASTIC"/>
    <property type="match status" value="1"/>
</dbReference>
<dbReference type="Pfam" id="PF01202">
    <property type="entry name" value="SKI"/>
    <property type="match status" value="1"/>
</dbReference>
<dbReference type="PRINTS" id="PR01100">
    <property type="entry name" value="SHIKIMTKNASE"/>
</dbReference>
<dbReference type="SUPFAM" id="SSF52540">
    <property type="entry name" value="P-loop containing nucleoside triphosphate hydrolases"/>
    <property type="match status" value="1"/>
</dbReference>
<dbReference type="PROSITE" id="PS01128">
    <property type="entry name" value="SHIKIMATE_KINASE"/>
    <property type="match status" value="1"/>
</dbReference>
<protein>
    <recommendedName>
        <fullName evidence="1">Shikimate kinase</fullName>
        <shortName evidence="1">SK</shortName>
        <ecNumber evidence="1">2.7.1.71</ecNumber>
    </recommendedName>
</protein>